<gene>
    <name evidence="1" type="primary">gatA</name>
    <name type="ordered locus">RSal33209_1289</name>
</gene>
<name>GATA_RENSM</name>
<dbReference type="EC" id="6.3.5.7" evidence="1"/>
<dbReference type="EMBL" id="CP000910">
    <property type="protein sequence ID" value="ABY23026.1"/>
    <property type="molecule type" value="Genomic_DNA"/>
</dbReference>
<dbReference type="RefSeq" id="WP_012244711.1">
    <property type="nucleotide sequence ID" value="NC_010168.1"/>
</dbReference>
<dbReference type="SMR" id="A9WPN2"/>
<dbReference type="STRING" id="288705.RSal33209_1289"/>
<dbReference type="KEGG" id="rsa:RSal33209_1289"/>
<dbReference type="eggNOG" id="COG0154">
    <property type="taxonomic scope" value="Bacteria"/>
</dbReference>
<dbReference type="HOGENOM" id="CLU_009600_0_3_11"/>
<dbReference type="Proteomes" id="UP000002007">
    <property type="component" value="Chromosome"/>
</dbReference>
<dbReference type="GO" id="GO:0030956">
    <property type="term" value="C:glutamyl-tRNA(Gln) amidotransferase complex"/>
    <property type="evidence" value="ECO:0007669"/>
    <property type="project" value="InterPro"/>
</dbReference>
<dbReference type="GO" id="GO:0005524">
    <property type="term" value="F:ATP binding"/>
    <property type="evidence" value="ECO:0007669"/>
    <property type="project" value="UniProtKB-KW"/>
</dbReference>
<dbReference type="GO" id="GO:0050567">
    <property type="term" value="F:glutaminyl-tRNA synthase (glutamine-hydrolyzing) activity"/>
    <property type="evidence" value="ECO:0007669"/>
    <property type="project" value="UniProtKB-UniRule"/>
</dbReference>
<dbReference type="GO" id="GO:0006412">
    <property type="term" value="P:translation"/>
    <property type="evidence" value="ECO:0007669"/>
    <property type="project" value="UniProtKB-UniRule"/>
</dbReference>
<dbReference type="Gene3D" id="3.90.1300.10">
    <property type="entry name" value="Amidase signature (AS) domain"/>
    <property type="match status" value="1"/>
</dbReference>
<dbReference type="HAMAP" id="MF_00120">
    <property type="entry name" value="GatA"/>
    <property type="match status" value="1"/>
</dbReference>
<dbReference type="InterPro" id="IPR000120">
    <property type="entry name" value="Amidase"/>
</dbReference>
<dbReference type="InterPro" id="IPR020556">
    <property type="entry name" value="Amidase_CS"/>
</dbReference>
<dbReference type="InterPro" id="IPR023631">
    <property type="entry name" value="Amidase_dom"/>
</dbReference>
<dbReference type="InterPro" id="IPR036928">
    <property type="entry name" value="AS_sf"/>
</dbReference>
<dbReference type="InterPro" id="IPR004412">
    <property type="entry name" value="GatA"/>
</dbReference>
<dbReference type="NCBIfam" id="TIGR00132">
    <property type="entry name" value="gatA"/>
    <property type="match status" value="1"/>
</dbReference>
<dbReference type="PANTHER" id="PTHR11895:SF151">
    <property type="entry name" value="GLUTAMYL-TRNA(GLN) AMIDOTRANSFERASE SUBUNIT A"/>
    <property type="match status" value="1"/>
</dbReference>
<dbReference type="PANTHER" id="PTHR11895">
    <property type="entry name" value="TRANSAMIDASE"/>
    <property type="match status" value="1"/>
</dbReference>
<dbReference type="Pfam" id="PF01425">
    <property type="entry name" value="Amidase"/>
    <property type="match status" value="1"/>
</dbReference>
<dbReference type="SUPFAM" id="SSF75304">
    <property type="entry name" value="Amidase signature (AS) enzymes"/>
    <property type="match status" value="1"/>
</dbReference>
<dbReference type="PROSITE" id="PS00571">
    <property type="entry name" value="AMIDASES"/>
    <property type="match status" value="1"/>
</dbReference>
<evidence type="ECO:0000255" key="1">
    <source>
        <dbReference type="HAMAP-Rule" id="MF_00120"/>
    </source>
</evidence>
<sequence>MTELIKLSAAALAAKLASGEVTSVQVTQAYLDRIALVDGELNAFLHLNAEEALRVAAEVDADRAAGKELHELAGVPIAIKDLIVTKGQPTTAGSKILEGWISPYDATVIEKIRAAKMPILGKTNLDEFAMGSSTEHSAFGPTRNPWDLTRIPGGSGGGSAAAVAAFEAPLALGTDTGGSIRQPGAVTGTVGVKPTYGGVSRYGAIAMASSLDQIGPVSRTVLDAALLQEVIGGHDPKDSTSLVDPINGQTGCTGLADAARLGANGDLTGVRIGVVKELGGEGYQEGVEVRFRESLELLRGAGAEIVEVSCPSFGYALGAYYLIMPSEASSNLAKFDGVRFGLRKLPEDGPMTIERVMSATRAAGFGNEVKRRIILGAYALSAGYYDAYYGSAQKFRTLIQRDFEAAFAQADVLISPTAPTTAFKFGEKMADPLAMYLNDVATIPANLAGVPGMSLPNGLADEDGLPSGIQLLAPAREDALMYRVGAALEALHEAQWGGPILDRAPELGAASNATAVEGTK</sequence>
<keyword id="KW-0067">ATP-binding</keyword>
<keyword id="KW-0436">Ligase</keyword>
<keyword id="KW-0547">Nucleotide-binding</keyword>
<keyword id="KW-0648">Protein biosynthesis</keyword>
<keyword id="KW-1185">Reference proteome</keyword>
<organism>
    <name type="scientific">Renibacterium salmoninarum (strain ATCC 33209 / DSM 20767 / JCM 11484 / NBRC 15589 / NCIMB 2235)</name>
    <dbReference type="NCBI Taxonomy" id="288705"/>
    <lineage>
        <taxon>Bacteria</taxon>
        <taxon>Bacillati</taxon>
        <taxon>Actinomycetota</taxon>
        <taxon>Actinomycetes</taxon>
        <taxon>Micrococcales</taxon>
        <taxon>Micrococcaceae</taxon>
        <taxon>Renibacterium</taxon>
    </lineage>
</organism>
<proteinExistence type="inferred from homology"/>
<protein>
    <recommendedName>
        <fullName evidence="1">Glutamyl-tRNA(Gln) amidotransferase subunit A</fullName>
        <shortName evidence="1">Glu-ADT subunit A</shortName>
        <ecNumber evidence="1">6.3.5.7</ecNumber>
    </recommendedName>
</protein>
<reference key="1">
    <citation type="journal article" date="2008" name="J. Bacteriol.">
        <title>Genome sequence of the fish pathogen Renibacterium salmoninarum suggests reductive evolution away from an environmental Arthrobacter ancestor.</title>
        <authorList>
            <person name="Wiens G.D."/>
            <person name="Rockey D.D."/>
            <person name="Wu Z."/>
            <person name="Chang J."/>
            <person name="Levy R."/>
            <person name="Crane S."/>
            <person name="Chen D.S."/>
            <person name="Capri G.R."/>
            <person name="Burnett J.R."/>
            <person name="Sudheesh P.S."/>
            <person name="Schipma M.J."/>
            <person name="Burd H."/>
            <person name="Bhattacharyya A."/>
            <person name="Rhodes L.D."/>
            <person name="Kaul R."/>
            <person name="Strom M.S."/>
        </authorList>
    </citation>
    <scope>NUCLEOTIDE SEQUENCE [LARGE SCALE GENOMIC DNA]</scope>
    <source>
        <strain>ATCC 33209 / DSM 20767 / JCM 11484 / NBRC 15589 / NCIMB 2235</strain>
    </source>
</reference>
<accession>A9WPN2</accession>
<feature type="chain" id="PRO_1000076139" description="Glutamyl-tRNA(Gln) amidotransferase subunit A">
    <location>
        <begin position="1"/>
        <end position="520"/>
    </location>
</feature>
<feature type="active site" description="Charge relay system" evidence="1">
    <location>
        <position position="80"/>
    </location>
</feature>
<feature type="active site" description="Charge relay system" evidence="1">
    <location>
        <position position="155"/>
    </location>
</feature>
<feature type="active site" description="Acyl-ester intermediate" evidence="1">
    <location>
        <position position="179"/>
    </location>
</feature>
<comment type="function">
    <text evidence="1">Allows the formation of correctly charged Gln-tRNA(Gln) through the transamidation of misacylated Glu-tRNA(Gln) in organisms which lack glutaminyl-tRNA synthetase. The reaction takes place in the presence of glutamine and ATP through an activated gamma-phospho-Glu-tRNA(Gln).</text>
</comment>
<comment type="catalytic activity">
    <reaction evidence="1">
        <text>L-glutamyl-tRNA(Gln) + L-glutamine + ATP + H2O = L-glutaminyl-tRNA(Gln) + L-glutamate + ADP + phosphate + H(+)</text>
        <dbReference type="Rhea" id="RHEA:17521"/>
        <dbReference type="Rhea" id="RHEA-COMP:9681"/>
        <dbReference type="Rhea" id="RHEA-COMP:9684"/>
        <dbReference type="ChEBI" id="CHEBI:15377"/>
        <dbReference type="ChEBI" id="CHEBI:15378"/>
        <dbReference type="ChEBI" id="CHEBI:29985"/>
        <dbReference type="ChEBI" id="CHEBI:30616"/>
        <dbReference type="ChEBI" id="CHEBI:43474"/>
        <dbReference type="ChEBI" id="CHEBI:58359"/>
        <dbReference type="ChEBI" id="CHEBI:78520"/>
        <dbReference type="ChEBI" id="CHEBI:78521"/>
        <dbReference type="ChEBI" id="CHEBI:456216"/>
        <dbReference type="EC" id="6.3.5.7"/>
    </reaction>
</comment>
<comment type="subunit">
    <text evidence="1">Heterotrimer of A, B and C subunits.</text>
</comment>
<comment type="similarity">
    <text evidence="1">Belongs to the amidase family. GatA subfamily.</text>
</comment>